<proteinExistence type="evidence at transcript level"/>
<feature type="chain" id="PRO_0000150739" description="Olfactory receptor 13G1">
    <location>
        <begin position="1"/>
        <end position="307"/>
    </location>
</feature>
<feature type="topological domain" description="Extracellular" evidence="1">
    <location>
        <begin position="1"/>
        <end position="22"/>
    </location>
</feature>
<feature type="transmembrane region" description="Helical; Name=1" evidence="1">
    <location>
        <begin position="23"/>
        <end position="43"/>
    </location>
</feature>
<feature type="topological domain" description="Cytoplasmic" evidence="1">
    <location>
        <begin position="44"/>
        <end position="51"/>
    </location>
</feature>
<feature type="transmembrane region" description="Helical; Name=2" evidence="1">
    <location>
        <begin position="52"/>
        <end position="72"/>
    </location>
</feature>
<feature type="topological domain" description="Extracellular" evidence="1">
    <location>
        <begin position="73"/>
        <end position="96"/>
    </location>
</feature>
<feature type="transmembrane region" description="Helical; Name=3" evidence="1">
    <location>
        <begin position="97"/>
        <end position="117"/>
    </location>
</feature>
<feature type="topological domain" description="Cytoplasmic" evidence="1">
    <location>
        <begin position="118"/>
        <end position="136"/>
    </location>
</feature>
<feature type="transmembrane region" description="Helical; Name=4" evidence="1">
    <location>
        <begin position="137"/>
        <end position="157"/>
    </location>
</feature>
<feature type="topological domain" description="Extracellular" evidence="1">
    <location>
        <begin position="158"/>
        <end position="194"/>
    </location>
</feature>
<feature type="transmembrane region" description="Helical; Name=5" evidence="1">
    <location>
        <begin position="195"/>
        <end position="214"/>
    </location>
</feature>
<feature type="topological domain" description="Cytoplasmic" evidence="1">
    <location>
        <begin position="215"/>
        <end position="234"/>
    </location>
</feature>
<feature type="transmembrane region" description="Helical; Name=6" evidence="1">
    <location>
        <begin position="235"/>
        <end position="255"/>
    </location>
</feature>
<feature type="topological domain" description="Extracellular" evidence="1">
    <location>
        <begin position="256"/>
        <end position="268"/>
    </location>
</feature>
<feature type="transmembrane region" description="Helical; Name=7" evidence="1">
    <location>
        <begin position="269"/>
        <end position="289"/>
    </location>
</feature>
<feature type="topological domain" description="Cytoplasmic" evidence="1">
    <location>
        <begin position="290"/>
        <end position="307"/>
    </location>
</feature>
<feature type="glycosylation site" description="N-linked (GlcNAc...) asparagine" evidence="1">
    <location>
        <position position="2"/>
    </location>
</feature>
<feature type="disulfide bond" evidence="2">
    <location>
        <begin position="94"/>
        <end position="186"/>
    </location>
</feature>
<feature type="sequence variant" id="VAR_062067" description="In dbSNP:rs28711149.">
    <original>K</original>
    <variation>I</variation>
    <location>
        <position position="46"/>
    </location>
</feature>
<feature type="sequence variant" id="VAR_048038" description="In dbSNP:rs1151640.">
    <original>I</original>
    <variation>V</variation>
    <location>
        <position position="132"/>
    </location>
</feature>
<feature type="sequence variant" id="VAR_062068" description="In dbSNP:rs28556931.">
    <original>M</original>
    <variation>L</variation>
    <location>
        <position position="146"/>
    </location>
</feature>
<feature type="sequence variant" id="VAR_062069" description="In dbSNP:rs28446289.">
    <original>R</original>
    <variation>C</variation>
    <location>
        <position position="224"/>
    </location>
</feature>
<gene>
    <name type="primary">OR13G1</name>
</gene>
<sequence length="307" mass="34672">MNHSVVTEFIILGLTKKPELQGIIFLFFLIVYLVAFLGNMLIIIAKIYNNTLHTPMYVFLLTLAVVDIICTTSIIPKMLGTMLTSENTISYAGCMSQLFLFTWSLGAEMVLFTTMAYDRYVAICFPLHYSTIMNHHMCVALLSMVMAIAVTNSWVHTALIMRLTFCGPNTIDHFFCEIPPLLALSCSPVRINEVMVYVADITLAIGDFILTCISYGFIIVAILRIRTVEGKRKAFSTCSSHLTVVTLYYSPVIYTYIRPASSYTFERDKVVAALYTLVTPTLNPMVYSFQNREMQAGIRKVFAFLKH</sequence>
<accession>Q8NGZ3</accession>
<accession>B2RN80</accession>
<accession>Q5T2T2</accession>
<accession>Q6IF86</accession>
<dbReference type="EMBL" id="AB065623">
    <property type="protein sequence ID" value="BAC05849.1"/>
    <property type="molecule type" value="Genomic_DNA"/>
</dbReference>
<dbReference type="EMBL" id="AL390860">
    <property type="status" value="NOT_ANNOTATED_CDS"/>
    <property type="molecule type" value="Genomic_DNA"/>
</dbReference>
<dbReference type="EMBL" id="CH471148">
    <property type="protein sequence ID" value="EAW77198.1"/>
    <property type="molecule type" value="Genomic_DNA"/>
</dbReference>
<dbReference type="EMBL" id="BC136736">
    <property type="protein sequence ID" value="AAI36737.1"/>
    <property type="molecule type" value="mRNA"/>
</dbReference>
<dbReference type="EMBL" id="BC136738">
    <property type="protein sequence ID" value="AAI36739.1"/>
    <property type="molecule type" value="mRNA"/>
</dbReference>
<dbReference type="EMBL" id="BK004376">
    <property type="protein sequence ID" value="DAA04774.1"/>
    <property type="molecule type" value="Genomic_DNA"/>
</dbReference>
<dbReference type="CCDS" id="CCDS31094.1"/>
<dbReference type="RefSeq" id="NP_001005487.1">
    <property type="nucleotide sequence ID" value="NM_001005487.2"/>
</dbReference>
<dbReference type="SMR" id="Q8NGZ3"/>
<dbReference type="BioGRID" id="137889">
    <property type="interactions" value="24"/>
</dbReference>
<dbReference type="FunCoup" id="Q8NGZ3">
    <property type="interactions" value="417"/>
</dbReference>
<dbReference type="IntAct" id="Q8NGZ3">
    <property type="interactions" value="22"/>
</dbReference>
<dbReference type="STRING" id="9606.ENSP00000493110"/>
<dbReference type="GlyCosmos" id="Q8NGZ3">
    <property type="glycosylation" value="1 site, No reported glycans"/>
</dbReference>
<dbReference type="GlyGen" id="Q8NGZ3">
    <property type="glycosylation" value="1 site"/>
</dbReference>
<dbReference type="iPTMnet" id="Q8NGZ3"/>
<dbReference type="PhosphoSitePlus" id="Q8NGZ3"/>
<dbReference type="BioMuta" id="OR13G1"/>
<dbReference type="DMDM" id="38372793"/>
<dbReference type="MassIVE" id="Q8NGZ3"/>
<dbReference type="PaxDb" id="9606-ENSP00000352717"/>
<dbReference type="PeptideAtlas" id="Q8NGZ3"/>
<dbReference type="Antibodypedia" id="57417">
    <property type="antibodies" value="55 antibodies from 16 providers"/>
</dbReference>
<dbReference type="DNASU" id="441933"/>
<dbReference type="Ensembl" id="ENST00000642119.1">
    <property type="protein sequence ID" value="ENSP00000493110.1"/>
    <property type="gene ID" value="ENSG00000197437.5"/>
</dbReference>
<dbReference type="GeneID" id="441933"/>
<dbReference type="KEGG" id="hsa:441933"/>
<dbReference type="MANE-Select" id="ENST00000642119.1">
    <property type="protein sequence ID" value="ENSP00000493110.1"/>
    <property type="RefSeq nucleotide sequence ID" value="NM_001005487.2"/>
    <property type="RefSeq protein sequence ID" value="NP_001005487.1"/>
</dbReference>
<dbReference type="UCSC" id="uc001idi.1">
    <property type="organism name" value="human"/>
</dbReference>
<dbReference type="AGR" id="HGNC:14999"/>
<dbReference type="CTD" id="441933"/>
<dbReference type="DisGeNET" id="441933"/>
<dbReference type="GeneCards" id="OR13G1"/>
<dbReference type="HGNC" id="HGNC:14999">
    <property type="gene designation" value="OR13G1"/>
</dbReference>
<dbReference type="HPA" id="ENSG00000197437">
    <property type="expression patterns" value="Not detected"/>
</dbReference>
<dbReference type="MIM" id="611677">
    <property type="type" value="gene"/>
</dbReference>
<dbReference type="neXtProt" id="NX_Q8NGZ3"/>
<dbReference type="OpenTargets" id="ENSG00000197437"/>
<dbReference type="PharmGKB" id="PA32046"/>
<dbReference type="VEuPathDB" id="HostDB:ENSG00000197437"/>
<dbReference type="eggNOG" id="ENOG502SKP5">
    <property type="taxonomic scope" value="Eukaryota"/>
</dbReference>
<dbReference type="GeneTree" id="ENSGT00940000162666"/>
<dbReference type="HOGENOM" id="CLU_012526_1_3_1"/>
<dbReference type="InParanoid" id="Q8NGZ3"/>
<dbReference type="OMA" id="IMNHYMC"/>
<dbReference type="OrthoDB" id="6145535at2759"/>
<dbReference type="PAN-GO" id="Q8NGZ3">
    <property type="GO annotations" value="4 GO annotations based on evolutionary models"/>
</dbReference>
<dbReference type="PhylomeDB" id="Q8NGZ3"/>
<dbReference type="TreeFam" id="TF339741"/>
<dbReference type="PathwayCommons" id="Q8NGZ3"/>
<dbReference type="Reactome" id="R-HSA-9752946">
    <property type="pathway name" value="Expression and translocation of olfactory receptors"/>
</dbReference>
<dbReference type="BioGRID-ORCS" id="441933">
    <property type="hits" value="14 hits in 751 CRISPR screens"/>
</dbReference>
<dbReference type="GeneWiki" id="OR13G1"/>
<dbReference type="GenomeRNAi" id="441933"/>
<dbReference type="Pharos" id="Q8NGZ3">
    <property type="development level" value="Tdark"/>
</dbReference>
<dbReference type="PRO" id="PR:Q8NGZ3"/>
<dbReference type="Proteomes" id="UP000005640">
    <property type="component" value="Chromosome 1"/>
</dbReference>
<dbReference type="RNAct" id="Q8NGZ3">
    <property type="molecule type" value="protein"/>
</dbReference>
<dbReference type="Bgee" id="ENSG00000197437">
    <property type="expression patterns" value="Expressed in right testis and 2 other cell types or tissues"/>
</dbReference>
<dbReference type="GO" id="GO:0016020">
    <property type="term" value="C:membrane"/>
    <property type="evidence" value="ECO:0000318"/>
    <property type="project" value="GO_Central"/>
</dbReference>
<dbReference type="GO" id="GO:0005886">
    <property type="term" value="C:plasma membrane"/>
    <property type="evidence" value="ECO:0007669"/>
    <property type="project" value="UniProtKB-SubCell"/>
</dbReference>
<dbReference type="GO" id="GO:0004930">
    <property type="term" value="F:G protein-coupled receptor activity"/>
    <property type="evidence" value="ECO:0007669"/>
    <property type="project" value="UniProtKB-KW"/>
</dbReference>
<dbReference type="GO" id="GO:0005549">
    <property type="term" value="F:odorant binding"/>
    <property type="evidence" value="ECO:0000318"/>
    <property type="project" value="GO_Central"/>
</dbReference>
<dbReference type="GO" id="GO:0004984">
    <property type="term" value="F:olfactory receptor activity"/>
    <property type="evidence" value="ECO:0000318"/>
    <property type="project" value="GO_Central"/>
</dbReference>
<dbReference type="GO" id="GO:0050911">
    <property type="term" value="P:detection of chemical stimulus involved in sensory perception of smell"/>
    <property type="evidence" value="ECO:0000318"/>
    <property type="project" value="GO_Central"/>
</dbReference>
<dbReference type="CDD" id="cd15232">
    <property type="entry name" value="7tmA_OR13-like"/>
    <property type="match status" value="1"/>
</dbReference>
<dbReference type="FunFam" id="1.10.1220.70:FF:000001">
    <property type="entry name" value="Olfactory receptor"/>
    <property type="match status" value="1"/>
</dbReference>
<dbReference type="FunFam" id="1.20.1070.10:FF:000015">
    <property type="entry name" value="Olfactory receptor"/>
    <property type="match status" value="1"/>
</dbReference>
<dbReference type="Gene3D" id="1.20.1070.10">
    <property type="entry name" value="Rhodopsin 7-helix transmembrane proteins"/>
    <property type="match status" value="1"/>
</dbReference>
<dbReference type="InterPro" id="IPR000276">
    <property type="entry name" value="GPCR_Rhodpsn"/>
</dbReference>
<dbReference type="InterPro" id="IPR017452">
    <property type="entry name" value="GPCR_Rhodpsn_7TM"/>
</dbReference>
<dbReference type="InterPro" id="IPR000725">
    <property type="entry name" value="Olfact_rcpt"/>
</dbReference>
<dbReference type="InterPro" id="IPR050516">
    <property type="entry name" value="Olfactory_GPCR"/>
</dbReference>
<dbReference type="PANTHER" id="PTHR26452">
    <property type="entry name" value="OLFACTORY RECEPTOR"/>
    <property type="match status" value="1"/>
</dbReference>
<dbReference type="Pfam" id="PF13853">
    <property type="entry name" value="7tm_4"/>
    <property type="match status" value="1"/>
</dbReference>
<dbReference type="PRINTS" id="PR00237">
    <property type="entry name" value="GPCRRHODOPSN"/>
</dbReference>
<dbReference type="PRINTS" id="PR00245">
    <property type="entry name" value="OLFACTORYR"/>
</dbReference>
<dbReference type="SUPFAM" id="SSF81321">
    <property type="entry name" value="Family A G protein-coupled receptor-like"/>
    <property type="match status" value="1"/>
</dbReference>
<dbReference type="PROSITE" id="PS50262">
    <property type="entry name" value="G_PROTEIN_RECEP_F1_2"/>
    <property type="match status" value="1"/>
</dbReference>
<protein>
    <recommendedName>
        <fullName>Olfactory receptor 13G1</fullName>
    </recommendedName>
    <alternativeName>
        <fullName>Olfactory receptor OR1-37</fullName>
    </alternativeName>
</protein>
<evidence type="ECO:0000255" key="1"/>
<evidence type="ECO:0000255" key="2">
    <source>
        <dbReference type="PROSITE-ProRule" id="PRU00521"/>
    </source>
</evidence>
<evidence type="ECO:0000305" key="3"/>
<name>O13G1_HUMAN</name>
<comment type="function">
    <text evidence="3">Odorant receptor.</text>
</comment>
<comment type="subcellular location">
    <subcellularLocation>
        <location>Cell membrane</location>
        <topology>Multi-pass membrane protein</topology>
    </subcellularLocation>
</comment>
<comment type="similarity">
    <text evidence="2">Belongs to the G-protein coupled receptor 1 family.</text>
</comment>
<comment type="online information" name="Human Olfactory Receptor Data Exploratorium (HORDE)">
    <link uri="http://genome.weizmann.ac.il/horde/card/index/symbol:OR13G1"/>
</comment>
<reference key="1">
    <citation type="submission" date="2001-07" db="EMBL/GenBank/DDBJ databases">
        <title>Genome-wide discovery and analysis of human seven transmembrane helix receptor genes.</title>
        <authorList>
            <person name="Suwa M."/>
            <person name="Sato T."/>
            <person name="Okouchi I."/>
            <person name="Arita M."/>
            <person name="Futami K."/>
            <person name="Matsumoto S."/>
            <person name="Tsutsumi S."/>
            <person name="Aburatani H."/>
            <person name="Asai K."/>
            <person name="Akiyama Y."/>
        </authorList>
    </citation>
    <scope>NUCLEOTIDE SEQUENCE [GENOMIC DNA]</scope>
</reference>
<reference key="2">
    <citation type="journal article" date="2006" name="Nature">
        <title>The DNA sequence and biological annotation of human chromosome 1.</title>
        <authorList>
            <person name="Gregory S.G."/>
            <person name="Barlow K.F."/>
            <person name="McLay K.E."/>
            <person name="Kaul R."/>
            <person name="Swarbreck D."/>
            <person name="Dunham A."/>
            <person name="Scott C.E."/>
            <person name="Howe K.L."/>
            <person name="Woodfine K."/>
            <person name="Spencer C.C.A."/>
            <person name="Jones M.C."/>
            <person name="Gillson C."/>
            <person name="Searle S."/>
            <person name="Zhou Y."/>
            <person name="Kokocinski F."/>
            <person name="McDonald L."/>
            <person name="Evans R."/>
            <person name="Phillips K."/>
            <person name="Atkinson A."/>
            <person name="Cooper R."/>
            <person name="Jones C."/>
            <person name="Hall R.E."/>
            <person name="Andrews T.D."/>
            <person name="Lloyd C."/>
            <person name="Ainscough R."/>
            <person name="Almeida J.P."/>
            <person name="Ambrose K.D."/>
            <person name="Anderson F."/>
            <person name="Andrew R.W."/>
            <person name="Ashwell R.I.S."/>
            <person name="Aubin K."/>
            <person name="Babbage A.K."/>
            <person name="Bagguley C.L."/>
            <person name="Bailey J."/>
            <person name="Beasley H."/>
            <person name="Bethel G."/>
            <person name="Bird C.P."/>
            <person name="Bray-Allen S."/>
            <person name="Brown J.Y."/>
            <person name="Brown A.J."/>
            <person name="Buckley D."/>
            <person name="Burton J."/>
            <person name="Bye J."/>
            <person name="Carder C."/>
            <person name="Chapman J.C."/>
            <person name="Clark S.Y."/>
            <person name="Clarke G."/>
            <person name="Clee C."/>
            <person name="Cobley V."/>
            <person name="Collier R.E."/>
            <person name="Corby N."/>
            <person name="Coville G.J."/>
            <person name="Davies J."/>
            <person name="Deadman R."/>
            <person name="Dunn M."/>
            <person name="Earthrowl M."/>
            <person name="Ellington A.G."/>
            <person name="Errington H."/>
            <person name="Frankish A."/>
            <person name="Frankland J."/>
            <person name="French L."/>
            <person name="Garner P."/>
            <person name="Garnett J."/>
            <person name="Gay L."/>
            <person name="Ghori M.R.J."/>
            <person name="Gibson R."/>
            <person name="Gilby L.M."/>
            <person name="Gillett W."/>
            <person name="Glithero R.J."/>
            <person name="Grafham D.V."/>
            <person name="Griffiths C."/>
            <person name="Griffiths-Jones S."/>
            <person name="Grocock R."/>
            <person name="Hammond S."/>
            <person name="Harrison E.S.I."/>
            <person name="Hart E."/>
            <person name="Haugen E."/>
            <person name="Heath P.D."/>
            <person name="Holmes S."/>
            <person name="Holt K."/>
            <person name="Howden P.J."/>
            <person name="Hunt A.R."/>
            <person name="Hunt S.E."/>
            <person name="Hunter G."/>
            <person name="Isherwood J."/>
            <person name="James R."/>
            <person name="Johnson C."/>
            <person name="Johnson D."/>
            <person name="Joy A."/>
            <person name="Kay M."/>
            <person name="Kershaw J.K."/>
            <person name="Kibukawa M."/>
            <person name="Kimberley A.M."/>
            <person name="King A."/>
            <person name="Knights A.J."/>
            <person name="Lad H."/>
            <person name="Laird G."/>
            <person name="Lawlor S."/>
            <person name="Leongamornlert D.A."/>
            <person name="Lloyd D.M."/>
            <person name="Loveland J."/>
            <person name="Lovell J."/>
            <person name="Lush M.J."/>
            <person name="Lyne R."/>
            <person name="Martin S."/>
            <person name="Mashreghi-Mohammadi M."/>
            <person name="Matthews L."/>
            <person name="Matthews N.S.W."/>
            <person name="McLaren S."/>
            <person name="Milne S."/>
            <person name="Mistry S."/>
            <person name="Moore M.J.F."/>
            <person name="Nickerson T."/>
            <person name="O'Dell C.N."/>
            <person name="Oliver K."/>
            <person name="Palmeiri A."/>
            <person name="Palmer S.A."/>
            <person name="Parker A."/>
            <person name="Patel D."/>
            <person name="Pearce A.V."/>
            <person name="Peck A.I."/>
            <person name="Pelan S."/>
            <person name="Phelps K."/>
            <person name="Phillimore B.J."/>
            <person name="Plumb R."/>
            <person name="Rajan J."/>
            <person name="Raymond C."/>
            <person name="Rouse G."/>
            <person name="Saenphimmachak C."/>
            <person name="Sehra H.K."/>
            <person name="Sheridan E."/>
            <person name="Shownkeen R."/>
            <person name="Sims S."/>
            <person name="Skuce C.D."/>
            <person name="Smith M."/>
            <person name="Steward C."/>
            <person name="Subramanian S."/>
            <person name="Sycamore N."/>
            <person name="Tracey A."/>
            <person name="Tromans A."/>
            <person name="Van Helmond Z."/>
            <person name="Wall M."/>
            <person name="Wallis J.M."/>
            <person name="White S."/>
            <person name="Whitehead S.L."/>
            <person name="Wilkinson J.E."/>
            <person name="Willey D.L."/>
            <person name="Williams H."/>
            <person name="Wilming L."/>
            <person name="Wray P.W."/>
            <person name="Wu Z."/>
            <person name="Coulson A."/>
            <person name="Vaudin M."/>
            <person name="Sulston J.E."/>
            <person name="Durbin R.M."/>
            <person name="Hubbard T."/>
            <person name="Wooster R."/>
            <person name="Dunham I."/>
            <person name="Carter N.P."/>
            <person name="McVean G."/>
            <person name="Ross M.T."/>
            <person name="Harrow J."/>
            <person name="Olson M.V."/>
            <person name="Beck S."/>
            <person name="Rogers J."/>
            <person name="Bentley D.R."/>
        </authorList>
    </citation>
    <scope>NUCLEOTIDE SEQUENCE [LARGE SCALE GENOMIC DNA]</scope>
</reference>
<reference key="3">
    <citation type="submission" date="2005-07" db="EMBL/GenBank/DDBJ databases">
        <authorList>
            <person name="Mural R.J."/>
            <person name="Istrail S."/>
            <person name="Sutton G.G."/>
            <person name="Florea L."/>
            <person name="Halpern A.L."/>
            <person name="Mobarry C.M."/>
            <person name="Lippert R."/>
            <person name="Walenz B."/>
            <person name="Shatkay H."/>
            <person name="Dew I."/>
            <person name="Miller J.R."/>
            <person name="Flanigan M.J."/>
            <person name="Edwards N.J."/>
            <person name="Bolanos R."/>
            <person name="Fasulo D."/>
            <person name="Halldorsson B.V."/>
            <person name="Hannenhalli S."/>
            <person name="Turner R."/>
            <person name="Yooseph S."/>
            <person name="Lu F."/>
            <person name="Nusskern D.R."/>
            <person name="Shue B.C."/>
            <person name="Zheng X.H."/>
            <person name="Zhong F."/>
            <person name="Delcher A.L."/>
            <person name="Huson D.H."/>
            <person name="Kravitz S.A."/>
            <person name="Mouchard L."/>
            <person name="Reinert K."/>
            <person name="Remington K.A."/>
            <person name="Clark A.G."/>
            <person name="Waterman M.S."/>
            <person name="Eichler E.E."/>
            <person name="Adams M.D."/>
            <person name="Hunkapiller M.W."/>
            <person name="Myers E.W."/>
            <person name="Venter J.C."/>
        </authorList>
    </citation>
    <scope>NUCLEOTIDE SEQUENCE [LARGE SCALE GENOMIC DNA]</scope>
</reference>
<reference key="4">
    <citation type="journal article" date="2004" name="Genome Res.">
        <title>The status, quality, and expansion of the NIH full-length cDNA project: the Mammalian Gene Collection (MGC).</title>
        <authorList>
            <consortium name="The MGC Project Team"/>
        </authorList>
    </citation>
    <scope>NUCLEOTIDE SEQUENCE [LARGE SCALE MRNA]</scope>
</reference>
<reference key="5">
    <citation type="journal article" date="2004" name="Proc. Natl. Acad. Sci. U.S.A.">
        <title>The human olfactory receptor gene family.</title>
        <authorList>
            <person name="Malnic B."/>
            <person name="Godfrey P.A."/>
            <person name="Buck L.B."/>
        </authorList>
    </citation>
    <scope>IDENTIFICATION</scope>
</reference>
<reference key="6">
    <citation type="journal article" date="2004" name="Proc. Natl. Acad. Sci. U.S.A.">
        <authorList>
            <person name="Malnic B."/>
            <person name="Godfrey P.A."/>
            <person name="Buck L.B."/>
        </authorList>
    </citation>
    <scope>ERRATUM OF PUBMED:14983052</scope>
</reference>
<keyword id="KW-1003">Cell membrane</keyword>
<keyword id="KW-1015">Disulfide bond</keyword>
<keyword id="KW-0297">G-protein coupled receptor</keyword>
<keyword id="KW-0325">Glycoprotein</keyword>
<keyword id="KW-0472">Membrane</keyword>
<keyword id="KW-0552">Olfaction</keyword>
<keyword id="KW-0675">Receptor</keyword>
<keyword id="KW-1185">Reference proteome</keyword>
<keyword id="KW-0716">Sensory transduction</keyword>
<keyword id="KW-0807">Transducer</keyword>
<keyword id="KW-0812">Transmembrane</keyword>
<keyword id="KW-1133">Transmembrane helix</keyword>
<organism>
    <name type="scientific">Homo sapiens</name>
    <name type="common">Human</name>
    <dbReference type="NCBI Taxonomy" id="9606"/>
    <lineage>
        <taxon>Eukaryota</taxon>
        <taxon>Metazoa</taxon>
        <taxon>Chordata</taxon>
        <taxon>Craniata</taxon>
        <taxon>Vertebrata</taxon>
        <taxon>Euteleostomi</taxon>
        <taxon>Mammalia</taxon>
        <taxon>Eutheria</taxon>
        <taxon>Euarchontoglires</taxon>
        <taxon>Primates</taxon>
        <taxon>Haplorrhini</taxon>
        <taxon>Catarrhini</taxon>
        <taxon>Hominidae</taxon>
        <taxon>Homo</taxon>
    </lineage>
</organism>